<accession>Q8Z524</accession>
<reference key="1">
    <citation type="journal article" date="2001" name="Nature">
        <title>Complete genome sequence of a multiple drug resistant Salmonella enterica serovar Typhi CT18.</title>
        <authorList>
            <person name="Parkhill J."/>
            <person name="Dougan G."/>
            <person name="James K.D."/>
            <person name="Thomson N.R."/>
            <person name="Pickard D."/>
            <person name="Wain J."/>
            <person name="Churcher C.M."/>
            <person name="Mungall K.L."/>
            <person name="Bentley S.D."/>
            <person name="Holden M.T.G."/>
            <person name="Sebaihia M."/>
            <person name="Baker S."/>
            <person name="Basham D."/>
            <person name="Brooks K."/>
            <person name="Chillingworth T."/>
            <person name="Connerton P."/>
            <person name="Cronin A."/>
            <person name="Davis P."/>
            <person name="Davies R.M."/>
            <person name="Dowd L."/>
            <person name="White N."/>
            <person name="Farrar J."/>
            <person name="Feltwell T."/>
            <person name="Hamlin N."/>
            <person name="Haque A."/>
            <person name="Hien T.T."/>
            <person name="Holroyd S."/>
            <person name="Jagels K."/>
            <person name="Krogh A."/>
            <person name="Larsen T.S."/>
            <person name="Leather S."/>
            <person name="Moule S."/>
            <person name="O'Gaora P."/>
            <person name="Parry C."/>
            <person name="Quail M.A."/>
            <person name="Rutherford K.M."/>
            <person name="Simmonds M."/>
            <person name="Skelton J."/>
            <person name="Stevens K."/>
            <person name="Whitehead S."/>
            <person name="Barrell B.G."/>
        </authorList>
    </citation>
    <scope>NUCLEOTIDE SEQUENCE [LARGE SCALE GENOMIC DNA]</scope>
    <source>
        <strain>CT18</strain>
    </source>
</reference>
<reference key="2">
    <citation type="journal article" date="2003" name="J. Bacteriol.">
        <title>Comparative genomics of Salmonella enterica serovar Typhi strains Ty2 and CT18.</title>
        <authorList>
            <person name="Deng W."/>
            <person name="Liou S.-R."/>
            <person name="Plunkett G. III"/>
            <person name="Mayhew G.F."/>
            <person name="Rose D.J."/>
            <person name="Burland V."/>
            <person name="Kodoyianni V."/>
            <person name="Schwartz D.C."/>
            <person name="Blattner F.R."/>
        </authorList>
    </citation>
    <scope>NUCLEOTIDE SEQUENCE [LARGE SCALE GENOMIC DNA]</scope>
    <source>
        <strain>ATCC 700931 / Ty2</strain>
    </source>
</reference>
<protein>
    <recommendedName>
        <fullName evidence="1">5'-deoxynucleotidase YfbR</fullName>
        <ecNumber evidence="1">3.1.3.89</ecNumber>
    </recommendedName>
    <alternativeName>
        <fullName evidence="1">5'-deoxyribonucleotidase</fullName>
    </alternativeName>
    <alternativeName>
        <fullName evidence="1">Nucleoside 5'-monophosphate phosphohydrolase</fullName>
    </alternativeName>
</protein>
<name>5DNU_SALTI</name>
<keyword id="KW-0963">Cytoplasm</keyword>
<keyword id="KW-0378">Hydrolase</keyword>
<keyword id="KW-0479">Metal-binding</keyword>
<keyword id="KW-0547">Nucleotide-binding</keyword>
<dbReference type="EC" id="3.1.3.89" evidence="1"/>
<dbReference type="EMBL" id="AL513382">
    <property type="protein sequence ID" value="CAD07564.1"/>
    <property type="molecule type" value="Genomic_DNA"/>
</dbReference>
<dbReference type="EMBL" id="AE014613">
    <property type="protein sequence ID" value="AAO68238.1"/>
    <property type="molecule type" value="Genomic_DNA"/>
</dbReference>
<dbReference type="RefSeq" id="NP_456874.1">
    <property type="nucleotide sequence ID" value="NC_003198.1"/>
</dbReference>
<dbReference type="RefSeq" id="WP_000813878.1">
    <property type="nucleotide sequence ID" value="NZ_WSUR01000029.1"/>
</dbReference>
<dbReference type="SMR" id="Q8Z524"/>
<dbReference type="STRING" id="220341.gene:17586461"/>
<dbReference type="KEGG" id="stt:t0532"/>
<dbReference type="KEGG" id="sty:STY2562"/>
<dbReference type="PATRIC" id="fig|220341.7.peg.2593"/>
<dbReference type="eggNOG" id="COG1896">
    <property type="taxonomic scope" value="Bacteria"/>
</dbReference>
<dbReference type="HOGENOM" id="CLU_084784_0_0_6"/>
<dbReference type="OMA" id="NQSHFFA"/>
<dbReference type="OrthoDB" id="9812744at2"/>
<dbReference type="Proteomes" id="UP000000541">
    <property type="component" value="Chromosome"/>
</dbReference>
<dbReference type="Proteomes" id="UP000002670">
    <property type="component" value="Chromosome"/>
</dbReference>
<dbReference type="GO" id="GO:0005737">
    <property type="term" value="C:cytoplasm"/>
    <property type="evidence" value="ECO:0007669"/>
    <property type="project" value="UniProtKB-SubCell"/>
</dbReference>
<dbReference type="GO" id="GO:0002953">
    <property type="term" value="F:5'-deoxynucleotidase activity"/>
    <property type="evidence" value="ECO:0007669"/>
    <property type="project" value="UniProtKB-EC"/>
</dbReference>
<dbReference type="GO" id="GO:0046872">
    <property type="term" value="F:metal ion binding"/>
    <property type="evidence" value="ECO:0007669"/>
    <property type="project" value="UniProtKB-KW"/>
</dbReference>
<dbReference type="GO" id="GO:0000166">
    <property type="term" value="F:nucleotide binding"/>
    <property type="evidence" value="ECO:0007669"/>
    <property type="project" value="UniProtKB-KW"/>
</dbReference>
<dbReference type="FunFam" id="1.10.3210.10:FF:000002">
    <property type="entry name" value="Nucleotidase YfbR"/>
    <property type="match status" value="1"/>
</dbReference>
<dbReference type="Gene3D" id="1.10.3210.10">
    <property type="entry name" value="Hypothetical protein af1432"/>
    <property type="match status" value="1"/>
</dbReference>
<dbReference type="HAMAP" id="MF_01100">
    <property type="entry name" value="5DNU"/>
    <property type="match status" value="1"/>
</dbReference>
<dbReference type="InterPro" id="IPR003607">
    <property type="entry name" value="HD/PDEase_dom"/>
</dbReference>
<dbReference type="InterPro" id="IPR006674">
    <property type="entry name" value="HD_domain"/>
</dbReference>
<dbReference type="InterPro" id="IPR022971">
    <property type="entry name" value="YfbR"/>
</dbReference>
<dbReference type="InterPro" id="IPR039356">
    <property type="entry name" value="YfbR/HDDC2"/>
</dbReference>
<dbReference type="NCBIfam" id="NF003009">
    <property type="entry name" value="PRK03826.1"/>
    <property type="match status" value="1"/>
</dbReference>
<dbReference type="PANTHER" id="PTHR11845">
    <property type="entry name" value="5'-DEOXYNUCLEOTIDASE HDDC2"/>
    <property type="match status" value="1"/>
</dbReference>
<dbReference type="PANTHER" id="PTHR11845:SF13">
    <property type="entry name" value="5'-DEOXYNUCLEOTIDASE HDDC2"/>
    <property type="match status" value="1"/>
</dbReference>
<dbReference type="Pfam" id="PF12917">
    <property type="entry name" value="YfbR-like"/>
    <property type="match status" value="1"/>
</dbReference>
<dbReference type="SMART" id="SM00471">
    <property type="entry name" value="HDc"/>
    <property type="match status" value="1"/>
</dbReference>
<dbReference type="SUPFAM" id="SSF109604">
    <property type="entry name" value="HD-domain/PDEase-like"/>
    <property type="match status" value="1"/>
</dbReference>
<dbReference type="PROSITE" id="PS51831">
    <property type="entry name" value="HD"/>
    <property type="match status" value="1"/>
</dbReference>
<proteinExistence type="inferred from homology"/>
<evidence type="ECO:0000255" key="1">
    <source>
        <dbReference type="HAMAP-Rule" id="MF_01100"/>
    </source>
</evidence>
<evidence type="ECO:0000255" key="2">
    <source>
        <dbReference type="PROSITE-ProRule" id="PRU01175"/>
    </source>
</evidence>
<sequence length="199" mass="22776">MKQSHFFAHLSRMKLINRWPLMRNVRTENVSEHSLQVAMVAHALAAIKNRKFGGQLNAERIALLAMYHDASEVLTGDLPTPVKYFNSQIAQEYKAIEKIAQQKLVDMAPDELHDIFAPLIDENAWSKEEQAIVKQADALCAYLKCLEELSAGNNEFRLAKTRLEKTLELRRSQEMDYFMAVFVPSFHLSLDEISQDSPL</sequence>
<feature type="chain" id="PRO_0000095057" description="5'-deoxynucleotidase YfbR">
    <location>
        <begin position="1"/>
        <end position="199"/>
    </location>
</feature>
<feature type="domain" description="HD" evidence="2">
    <location>
        <begin position="30"/>
        <end position="142"/>
    </location>
</feature>
<feature type="binding site" evidence="1">
    <location>
        <begin position="18"/>
        <end position="19"/>
    </location>
    <ligand>
        <name>substrate</name>
    </ligand>
</feature>
<feature type="binding site" evidence="1">
    <location>
        <position position="33"/>
    </location>
    <ligand>
        <name>a divalent metal cation</name>
        <dbReference type="ChEBI" id="CHEBI:60240"/>
    </ligand>
</feature>
<feature type="binding site" evidence="1">
    <location>
        <position position="33"/>
    </location>
    <ligand>
        <name>substrate</name>
    </ligand>
</feature>
<feature type="binding site" evidence="1">
    <location>
        <position position="68"/>
    </location>
    <ligand>
        <name>a divalent metal cation</name>
        <dbReference type="ChEBI" id="CHEBI:60240"/>
    </ligand>
</feature>
<feature type="binding site" evidence="1">
    <location>
        <position position="69"/>
    </location>
    <ligand>
        <name>a divalent metal cation</name>
        <dbReference type="ChEBI" id="CHEBI:60240"/>
    </ligand>
</feature>
<feature type="binding site" evidence="1">
    <location>
        <position position="69"/>
    </location>
    <ligand>
        <name>substrate</name>
    </ligand>
</feature>
<feature type="binding site" evidence="1">
    <location>
        <begin position="77"/>
        <end position="80"/>
    </location>
    <ligand>
        <name>substrate</name>
    </ligand>
</feature>
<feature type="binding site" evidence="1">
    <location>
        <position position="137"/>
    </location>
    <ligand>
        <name>a divalent metal cation</name>
        <dbReference type="ChEBI" id="CHEBI:60240"/>
    </ligand>
</feature>
<feature type="binding site" evidence="1">
    <location>
        <position position="137"/>
    </location>
    <ligand>
        <name>substrate</name>
    </ligand>
</feature>
<feature type="site" description="Appears to be important in orienting the phosphate for catalysis" evidence="1">
    <location>
        <position position="18"/>
    </location>
</feature>
<comment type="function">
    <text evidence="1">Catalyzes the strictly specific dephosphorylation of 2'-deoxyribonucleoside 5'-monophosphates.</text>
</comment>
<comment type="catalytic activity">
    <reaction evidence="1">
        <text>a 2'-deoxyribonucleoside 5'-phosphate + H2O = a 2'-deoxyribonucleoside + phosphate</text>
        <dbReference type="Rhea" id="RHEA:36167"/>
        <dbReference type="ChEBI" id="CHEBI:15377"/>
        <dbReference type="ChEBI" id="CHEBI:18274"/>
        <dbReference type="ChEBI" id="CHEBI:43474"/>
        <dbReference type="ChEBI" id="CHEBI:65317"/>
        <dbReference type="EC" id="3.1.3.89"/>
    </reaction>
</comment>
<comment type="cofactor">
    <cofactor evidence="1">
        <name>a divalent metal cation</name>
        <dbReference type="ChEBI" id="CHEBI:60240"/>
    </cofactor>
</comment>
<comment type="subunit">
    <text evidence="1">Homodimer.</text>
</comment>
<comment type="subcellular location">
    <subcellularLocation>
        <location evidence="1">Cytoplasm</location>
    </subcellularLocation>
</comment>
<comment type="similarity">
    <text evidence="1">Belongs to the 5DNU family.</text>
</comment>
<gene>
    <name evidence="1" type="primary">yfbR</name>
    <name type="ordered locus">STY2562</name>
    <name type="ordered locus">t0532</name>
</gene>
<organism>
    <name type="scientific">Salmonella typhi</name>
    <dbReference type="NCBI Taxonomy" id="90370"/>
    <lineage>
        <taxon>Bacteria</taxon>
        <taxon>Pseudomonadati</taxon>
        <taxon>Pseudomonadota</taxon>
        <taxon>Gammaproteobacteria</taxon>
        <taxon>Enterobacterales</taxon>
        <taxon>Enterobacteriaceae</taxon>
        <taxon>Salmonella</taxon>
    </lineage>
</organism>